<protein>
    <recommendedName>
        <fullName>2-carboxy-1,4-naphthoquinone phytyltransferase, chloroplastic</fullName>
        <ecNumber evidence="2">2.5.1.130</ecNumber>
    </recommendedName>
    <alternativeName>
        <fullName>1,4-dihydroxy-2-naphthoate phytyltransferase</fullName>
    </alternativeName>
    <alternativeName>
        <fullName>1,4-dihydroxy-2-naphthoate polyprenyltransferase</fullName>
    </alternativeName>
    <alternativeName>
        <fullName>Protein ABERRANT CHLOROPLAST DEVELOPMENT 4</fullName>
    </alternativeName>
    <alternativeName>
        <fullName>menA-like protein</fullName>
        <shortName>AtMENA</shortName>
    </alternativeName>
</protein>
<evidence type="ECO:0000255" key="1"/>
<evidence type="ECO:0000269" key="2">
    <source>
    </source>
</evidence>
<evidence type="ECO:0000303" key="3">
    <source ref="4"/>
</evidence>
<evidence type="ECO:0000303" key="4">
    <source ref="5"/>
</evidence>
<evidence type="ECO:0000305" key="5"/>
<keyword id="KW-0025">Alternative splicing</keyword>
<keyword id="KW-0150">Chloroplast</keyword>
<keyword id="KW-0472">Membrane</keyword>
<keyword id="KW-0934">Plastid</keyword>
<keyword id="KW-1185">Reference proteome</keyword>
<keyword id="KW-0808">Transferase</keyword>
<keyword id="KW-0809">Transit peptide</keyword>
<keyword id="KW-0812">Transmembrane</keyword>
<keyword id="KW-1133">Transmembrane helix</keyword>
<accession>Q0WUA3</accession>
<accession>Q6NLY2</accession>
<reference key="1">
    <citation type="journal article" date="2005" name="Plant J.">
        <title>Inactivation and deficiency of core proteins of photosystems I and II caused by genetical phylloquinone and plastoquinone deficiency but retained lamellar structure in a T-DNA mutant of Arabidopsis.</title>
        <authorList>
            <person name="Shimada H."/>
            <person name="Ohno R."/>
            <person name="Shibata M."/>
            <person name="Ikegami I."/>
            <person name="Onai K."/>
            <person name="Ohto M.A."/>
            <person name="Takamiya K."/>
        </authorList>
    </citation>
    <scope>NUCLEOTIDE SEQUENCE [MRNA]</scope>
    <scope>FUNCTION</scope>
    <scope>CATALYTIC ACTIVITY</scope>
    <scope>SUBCELLULAR LOCATION</scope>
    <scope>DISRUPTION PHENOTYPE (ISOFORM 1)</scope>
</reference>
<reference key="2">
    <citation type="journal article" date="2000" name="Nature">
        <title>Sequence and analysis of chromosome 1 of the plant Arabidopsis thaliana.</title>
        <authorList>
            <person name="Theologis A."/>
            <person name="Ecker J.R."/>
            <person name="Palm C.J."/>
            <person name="Federspiel N.A."/>
            <person name="Kaul S."/>
            <person name="White O."/>
            <person name="Alonso J."/>
            <person name="Altafi H."/>
            <person name="Araujo R."/>
            <person name="Bowman C.L."/>
            <person name="Brooks S.Y."/>
            <person name="Buehler E."/>
            <person name="Chan A."/>
            <person name="Chao Q."/>
            <person name="Chen H."/>
            <person name="Cheuk R.F."/>
            <person name="Chin C.W."/>
            <person name="Chung M.K."/>
            <person name="Conn L."/>
            <person name="Conway A.B."/>
            <person name="Conway A.R."/>
            <person name="Creasy T.H."/>
            <person name="Dewar K."/>
            <person name="Dunn P."/>
            <person name="Etgu P."/>
            <person name="Feldblyum T.V."/>
            <person name="Feng J.-D."/>
            <person name="Fong B."/>
            <person name="Fujii C.Y."/>
            <person name="Gill J.E."/>
            <person name="Goldsmith A.D."/>
            <person name="Haas B."/>
            <person name="Hansen N.F."/>
            <person name="Hughes B."/>
            <person name="Huizar L."/>
            <person name="Hunter J.L."/>
            <person name="Jenkins J."/>
            <person name="Johnson-Hopson C."/>
            <person name="Khan S."/>
            <person name="Khaykin E."/>
            <person name="Kim C.J."/>
            <person name="Koo H.L."/>
            <person name="Kremenetskaia I."/>
            <person name="Kurtz D.B."/>
            <person name="Kwan A."/>
            <person name="Lam B."/>
            <person name="Langin-Hooper S."/>
            <person name="Lee A."/>
            <person name="Lee J.M."/>
            <person name="Lenz C.A."/>
            <person name="Li J.H."/>
            <person name="Li Y.-P."/>
            <person name="Lin X."/>
            <person name="Liu S.X."/>
            <person name="Liu Z.A."/>
            <person name="Luros J.S."/>
            <person name="Maiti R."/>
            <person name="Marziali A."/>
            <person name="Militscher J."/>
            <person name="Miranda M."/>
            <person name="Nguyen M."/>
            <person name="Nierman W.C."/>
            <person name="Osborne B.I."/>
            <person name="Pai G."/>
            <person name="Peterson J."/>
            <person name="Pham P.K."/>
            <person name="Rizzo M."/>
            <person name="Rooney T."/>
            <person name="Rowley D."/>
            <person name="Sakano H."/>
            <person name="Salzberg S.L."/>
            <person name="Schwartz J.R."/>
            <person name="Shinn P."/>
            <person name="Southwick A.M."/>
            <person name="Sun H."/>
            <person name="Tallon L.J."/>
            <person name="Tambunga G."/>
            <person name="Toriumi M.J."/>
            <person name="Town C.D."/>
            <person name="Utterback T."/>
            <person name="Van Aken S."/>
            <person name="Vaysberg M."/>
            <person name="Vysotskaia V.S."/>
            <person name="Walker M."/>
            <person name="Wu D."/>
            <person name="Yu G."/>
            <person name="Fraser C.M."/>
            <person name="Venter J.C."/>
            <person name="Davis R.W."/>
        </authorList>
    </citation>
    <scope>NUCLEOTIDE SEQUENCE [LARGE SCALE GENOMIC DNA]</scope>
    <source>
        <strain>cv. Columbia</strain>
    </source>
</reference>
<reference key="3">
    <citation type="journal article" date="2017" name="Plant J.">
        <title>Araport11: a complete reannotation of the Arabidopsis thaliana reference genome.</title>
        <authorList>
            <person name="Cheng C.Y."/>
            <person name="Krishnakumar V."/>
            <person name="Chan A.P."/>
            <person name="Thibaud-Nissen F."/>
            <person name="Schobel S."/>
            <person name="Town C.D."/>
        </authorList>
    </citation>
    <scope>GENOME REANNOTATION</scope>
    <source>
        <strain>cv. Columbia</strain>
    </source>
</reference>
<reference key="4">
    <citation type="submission" date="2004-03" db="EMBL/GenBank/DDBJ databases">
        <title>Arabidopsis ORF clones.</title>
        <authorList>
            <person name="Cheuk R."/>
            <person name="Chen H."/>
            <person name="Kim C.J."/>
            <person name="Shinn P."/>
            <person name="Carninci P."/>
            <person name="Hayashizaki Y."/>
            <person name="Ishida J."/>
            <person name="Kamiya A."/>
            <person name="Kawai J."/>
            <person name="Narusaka M."/>
            <person name="Sakurai T."/>
            <person name="Satou M."/>
            <person name="Seki M."/>
            <person name="Shinozaki K."/>
            <person name="Ecker J.R."/>
        </authorList>
    </citation>
    <scope>NUCLEOTIDE SEQUENCE [LARGE SCALE MRNA] (ISOFORM 2)</scope>
</reference>
<reference key="5">
    <citation type="submission" date="2006-07" db="EMBL/GenBank/DDBJ databases">
        <title>Large-scale analysis of RIKEN Arabidopsis full-length (RAFL) cDNAs.</title>
        <authorList>
            <person name="Totoki Y."/>
            <person name="Seki M."/>
            <person name="Ishida J."/>
            <person name="Nakajima M."/>
            <person name="Enju A."/>
            <person name="Kamiya A."/>
            <person name="Narusaka M."/>
            <person name="Shin-i T."/>
            <person name="Nakagawa M."/>
            <person name="Sakamoto N."/>
            <person name="Oishi K."/>
            <person name="Kohara Y."/>
            <person name="Kobayashi M."/>
            <person name="Toyoda A."/>
            <person name="Sakaki Y."/>
            <person name="Sakurai T."/>
            <person name="Iida K."/>
            <person name="Akiyama K."/>
            <person name="Satou M."/>
            <person name="Toyoda T."/>
            <person name="Konagaya A."/>
            <person name="Carninci P."/>
            <person name="Kawai J."/>
            <person name="Hayashizaki Y."/>
            <person name="Shinozaki K."/>
        </authorList>
    </citation>
    <scope>NUCLEOTIDE SEQUENCE [LARGE SCALE MRNA] (ISOFORM 2)</scope>
    <source>
        <strain>cv. Columbia</strain>
    </source>
</reference>
<feature type="transit peptide" description="Chloroplast" evidence="1">
    <location>
        <begin position="1"/>
        <end position="66"/>
    </location>
</feature>
<feature type="chain" id="PRO_0000406881" description="2-carboxy-1,4-naphthoquinone phytyltransferase, chloroplastic">
    <location>
        <begin position="67"/>
        <end position="382"/>
    </location>
</feature>
<feature type="transmembrane region" description="Helical" evidence="1">
    <location>
        <begin position="99"/>
        <end position="119"/>
    </location>
</feature>
<feature type="transmembrane region" description="Helical" evidence="1">
    <location>
        <begin position="123"/>
        <end position="143"/>
    </location>
</feature>
<feature type="transmembrane region" description="Helical" evidence="1">
    <location>
        <begin position="168"/>
        <end position="188"/>
    </location>
</feature>
<feature type="transmembrane region" description="Helical" evidence="1">
    <location>
        <begin position="196"/>
        <end position="216"/>
    </location>
</feature>
<feature type="transmembrane region" description="Helical" evidence="1">
    <location>
        <begin position="224"/>
        <end position="244"/>
    </location>
</feature>
<feature type="transmembrane region" description="Helical" evidence="1">
    <location>
        <begin position="257"/>
        <end position="277"/>
    </location>
</feature>
<feature type="transmembrane region" description="Helical" evidence="1">
    <location>
        <begin position="323"/>
        <end position="343"/>
    </location>
</feature>
<feature type="transmembrane region" description="Helical" evidence="1">
    <location>
        <begin position="361"/>
        <end position="381"/>
    </location>
</feature>
<feature type="splice variant" id="VSP_040861" description="In isoform 2." evidence="3 4">
    <location>
        <begin position="1"/>
        <end position="95"/>
    </location>
</feature>
<feature type="sequence conflict" description="In Ref. 4; AAS76683." evidence="5" ref="4">
    <original>L</original>
    <variation>Q</variation>
    <location>
        <position position="126"/>
    </location>
</feature>
<name>MENA_ARATH</name>
<comment type="function">
    <text evidence="2">Involved in the synthesis of phylloquinone (vitamin K1). Catalyzes the transfer of a prenyl chain to 2-carboxy-1,4-naphthoquinone.</text>
</comment>
<comment type="catalytic activity">
    <reaction evidence="2">
        <text>2-carboxy-1,4-naphthoquinone + phytyl diphosphate + H(+) = demethylphylloquinone + CO2 + diphosphate</text>
        <dbReference type="Rhea" id="RHEA:47740"/>
        <dbReference type="ChEBI" id="CHEBI:15378"/>
        <dbReference type="ChEBI" id="CHEBI:16526"/>
        <dbReference type="ChEBI" id="CHEBI:31087"/>
        <dbReference type="ChEBI" id="CHEBI:33019"/>
        <dbReference type="ChEBI" id="CHEBI:75434"/>
        <dbReference type="ChEBI" id="CHEBI:87842"/>
        <dbReference type="EC" id="2.5.1.130"/>
    </reaction>
</comment>
<comment type="subcellular location">
    <subcellularLocation>
        <location evidence="2">Plastid</location>
        <location evidence="2">Chloroplast membrane</location>
        <topology evidence="2">Multi-pass membrane protein</topology>
    </subcellularLocation>
</comment>
<comment type="alternative products">
    <event type="alternative splicing"/>
    <isoform>
        <id>Q0WUA3-1</id>
        <name>1</name>
        <sequence type="displayed"/>
    </isoform>
    <isoform>
        <id>Q0WUA3-2</id>
        <name>2</name>
        <sequence type="described" ref="VSP_040861"/>
    </isoform>
</comment>
<comment type="disruption phenotype">
    <text>Slower growth and dwarfism. Albino phenotype in aging leaves. Decreased number of chloroplasts, but normal lamellar structure retained. Absence of phylloquinone and 97% decrease in the content of plastoquinone.</text>
</comment>
<comment type="similarity">
    <text evidence="5">Belongs to the MenA family. Type 2 subfamily.</text>
</comment>
<organism>
    <name type="scientific">Arabidopsis thaliana</name>
    <name type="common">Mouse-ear cress</name>
    <dbReference type="NCBI Taxonomy" id="3702"/>
    <lineage>
        <taxon>Eukaryota</taxon>
        <taxon>Viridiplantae</taxon>
        <taxon>Streptophyta</taxon>
        <taxon>Embryophyta</taxon>
        <taxon>Tracheophyta</taxon>
        <taxon>Spermatophyta</taxon>
        <taxon>Magnoliopsida</taxon>
        <taxon>eudicotyledons</taxon>
        <taxon>Gunneridae</taxon>
        <taxon>Pentapetalae</taxon>
        <taxon>rosids</taxon>
        <taxon>malvids</taxon>
        <taxon>Brassicales</taxon>
        <taxon>Brassicaceae</taxon>
        <taxon>Camelineae</taxon>
        <taxon>Arabidopsis</taxon>
    </lineage>
</organism>
<dbReference type="EC" id="2.5.1.130" evidence="2"/>
<dbReference type="EMBL" id="AC002292">
    <property type="status" value="NOT_ANNOTATED_CDS"/>
    <property type="molecule type" value="Genomic_DNA"/>
</dbReference>
<dbReference type="EMBL" id="CP002684">
    <property type="protein sequence ID" value="AEE33701.1"/>
    <property type="molecule type" value="Genomic_DNA"/>
</dbReference>
<dbReference type="EMBL" id="CP002684">
    <property type="protein sequence ID" value="AEE33702.1"/>
    <property type="molecule type" value="Genomic_DNA"/>
</dbReference>
<dbReference type="EMBL" id="BT012196">
    <property type="protein sequence ID" value="AAS76683.1"/>
    <property type="molecule type" value="mRNA"/>
</dbReference>
<dbReference type="EMBL" id="AK227267">
    <property type="protein sequence ID" value="BAE99295.1"/>
    <property type="molecule type" value="mRNA"/>
</dbReference>
<dbReference type="RefSeq" id="NP_001117518.1">
    <molecule id="Q0WUA3-1"/>
    <property type="nucleotide sequence ID" value="NM_001124046.2"/>
</dbReference>
<dbReference type="RefSeq" id="NP_176259.2">
    <molecule id="Q0WUA3-2"/>
    <property type="nucleotide sequence ID" value="NM_104743.3"/>
</dbReference>
<dbReference type="SMR" id="Q0WUA3"/>
<dbReference type="BioGRID" id="27578">
    <property type="interactions" value="15"/>
</dbReference>
<dbReference type="FunCoup" id="Q0WUA3">
    <property type="interactions" value="1091"/>
</dbReference>
<dbReference type="IntAct" id="Q0WUA3">
    <property type="interactions" value="3"/>
</dbReference>
<dbReference type="STRING" id="3702.Q0WUA3"/>
<dbReference type="PaxDb" id="3702-AT1G60600.2"/>
<dbReference type="ProteomicsDB" id="250639">
    <molecule id="Q0WUA3-1"/>
</dbReference>
<dbReference type="EnsemblPlants" id="AT1G60600.1">
    <molecule id="Q0WUA3-2"/>
    <property type="protein sequence ID" value="AT1G60600.1"/>
    <property type="gene ID" value="AT1G60600"/>
</dbReference>
<dbReference type="EnsemblPlants" id="AT1G60600.2">
    <molecule id="Q0WUA3-1"/>
    <property type="protein sequence ID" value="AT1G60600.2"/>
    <property type="gene ID" value="AT1G60600"/>
</dbReference>
<dbReference type="GeneID" id="842354"/>
<dbReference type="Gramene" id="AT1G60600.1">
    <molecule id="Q0WUA3-2"/>
    <property type="protein sequence ID" value="AT1G60600.1"/>
    <property type="gene ID" value="AT1G60600"/>
</dbReference>
<dbReference type="Gramene" id="AT1G60600.2">
    <molecule id="Q0WUA3-1"/>
    <property type="protein sequence ID" value="AT1G60600.2"/>
    <property type="gene ID" value="AT1G60600"/>
</dbReference>
<dbReference type="KEGG" id="ath:AT1G60600"/>
<dbReference type="Araport" id="AT1G60600"/>
<dbReference type="TAIR" id="AT1G60600">
    <property type="gene designation" value="ABC4"/>
</dbReference>
<dbReference type="eggNOG" id="KOG4581">
    <property type="taxonomic scope" value="Eukaryota"/>
</dbReference>
<dbReference type="InParanoid" id="Q0WUA3"/>
<dbReference type="OMA" id="RGFFMCK"/>
<dbReference type="PhylomeDB" id="Q0WUA3"/>
<dbReference type="BRENDA" id="2.5.1.130">
    <property type="organism ID" value="399"/>
</dbReference>
<dbReference type="PRO" id="PR:Q0WUA3"/>
<dbReference type="Proteomes" id="UP000006548">
    <property type="component" value="Chromosome 1"/>
</dbReference>
<dbReference type="ExpressionAtlas" id="Q0WUA3">
    <property type="expression patterns" value="baseline and differential"/>
</dbReference>
<dbReference type="GO" id="GO:0009507">
    <property type="term" value="C:chloroplast"/>
    <property type="evidence" value="ECO:0000314"/>
    <property type="project" value="TAIR"/>
</dbReference>
<dbReference type="GO" id="GO:0031969">
    <property type="term" value="C:chloroplast membrane"/>
    <property type="evidence" value="ECO:0007669"/>
    <property type="project" value="UniProtKB-SubCell"/>
</dbReference>
<dbReference type="GO" id="GO:0046428">
    <property type="term" value="F:1,4-dihydroxy-2-naphthoate polyprenyltransferase activity"/>
    <property type="evidence" value="ECO:0000250"/>
    <property type="project" value="TAIR"/>
</dbReference>
<dbReference type="GO" id="GO:0009772">
    <property type="term" value="P:photosynthetic electron transport in photosystem II"/>
    <property type="evidence" value="ECO:0000315"/>
    <property type="project" value="TAIR"/>
</dbReference>
<dbReference type="GO" id="GO:0042372">
    <property type="term" value="P:phylloquinone biosynthetic process"/>
    <property type="evidence" value="ECO:0000315"/>
    <property type="project" value="TAIR"/>
</dbReference>
<dbReference type="GO" id="GO:0010236">
    <property type="term" value="P:plastoquinone biosynthetic process"/>
    <property type="evidence" value="ECO:0000315"/>
    <property type="project" value="TAIR"/>
</dbReference>
<dbReference type="CDD" id="cd13962">
    <property type="entry name" value="PT_UbiA_UBIAD1"/>
    <property type="match status" value="1"/>
</dbReference>
<dbReference type="HAMAP" id="MF_01938">
    <property type="entry name" value="MenA_2"/>
    <property type="match status" value="1"/>
</dbReference>
<dbReference type="InterPro" id="IPR011937">
    <property type="entry name" value="DHNA_phytyltransferase_MenA"/>
</dbReference>
<dbReference type="InterPro" id="IPR000537">
    <property type="entry name" value="UbiA_prenyltransferase"/>
</dbReference>
<dbReference type="InterPro" id="IPR026046">
    <property type="entry name" value="UBIAD1"/>
</dbReference>
<dbReference type="NCBIfam" id="TIGR02235">
    <property type="entry name" value="menA_cyano-plnt"/>
    <property type="match status" value="1"/>
</dbReference>
<dbReference type="PANTHER" id="PTHR13929">
    <property type="entry name" value="1,4-DIHYDROXY-2-NAPHTHOATE OCTAPRENYLTRANSFERASE"/>
    <property type="match status" value="1"/>
</dbReference>
<dbReference type="PANTHER" id="PTHR13929:SF0">
    <property type="entry name" value="UBIA PRENYLTRANSFERASE DOMAIN-CONTAINING PROTEIN 1"/>
    <property type="match status" value="1"/>
</dbReference>
<dbReference type="Pfam" id="PF01040">
    <property type="entry name" value="UbiA"/>
    <property type="match status" value="1"/>
</dbReference>
<gene>
    <name type="primary">ABC4</name>
    <name type="ordered locus">At1g60600</name>
    <name type="ORF">F8A5.36</name>
</gene>
<proteinExistence type="evidence at protein level"/>
<sequence>MVNFVSLCDIKYGFVPKNSTDLFVKRKIHKLPSRGDVITRLPVFGSNARENLNAKPRRNLRVRPIFCKSYGDAAKVYQEEEIPRAKLIWRAIKLPMYSVALVPLTVGASAAYLETGLFLARRYVTLLLSSILIITWLNLSNDVYDFDTGADKNKMESVVNLVGSRTGTLAAAITSLALGVSGLVWTSLNASNIRAILLLASAILCGYVYQCPPFRLSYQGLGEPLCFAAFGPFATTAFYLLLGSSSEMRHLPLSGRVLSSSVLVGFTTSLILFCSHFHQVDGDLAVGKYSPLVRLGTEKGAFVVRWTIRLLYSMLLVLGLTRILPLPCTLMCFLTLPVGNLVSSYVEKHHKDNGKIFMAKYYCVRLHALLGAALSLGLVIAR</sequence>